<protein>
    <recommendedName>
        <fullName evidence="1">Large ribosomal subunit protein uL18</fullName>
    </recommendedName>
    <alternativeName>
        <fullName evidence="2">50S ribosomal protein L18</fullName>
    </alternativeName>
</protein>
<name>RL18_THEGJ</name>
<reference key="1">
    <citation type="journal article" date="2007" name="Genome Biol.">
        <title>Genome analysis and genome-wide proteomics of Thermococcus gammatolerans, the most radioresistant organism known amongst the Archaea.</title>
        <authorList>
            <person name="Zivanovic Y."/>
            <person name="Armengaud J."/>
            <person name="Lagorce A."/>
            <person name="Leplat C."/>
            <person name="Guerin P."/>
            <person name="Dutertre M."/>
            <person name="Anthouard V."/>
            <person name="Forterre P."/>
            <person name="Wincker P."/>
            <person name="Confalonieri F."/>
        </authorList>
    </citation>
    <scope>NUCLEOTIDE SEQUENCE [LARGE SCALE GENOMIC DNA]</scope>
    <source>
        <strain>DSM 15229 / JCM 11827 / EJ3</strain>
    </source>
</reference>
<gene>
    <name evidence="1" type="primary">rpl18</name>
    <name type="ordered locus">TGAM_1983</name>
</gene>
<feature type="chain" id="PRO_1000214691" description="Large ribosomal subunit protein uL18">
    <location>
        <begin position="1"/>
        <end position="201"/>
    </location>
</feature>
<dbReference type="EMBL" id="CP001398">
    <property type="protein sequence ID" value="ACS34485.1"/>
    <property type="molecule type" value="Genomic_DNA"/>
</dbReference>
<dbReference type="RefSeq" id="WP_015859589.1">
    <property type="nucleotide sequence ID" value="NC_012804.1"/>
</dbReference>
<dbReference type="SMR" id="C5A266"/>
<dbReference type="STRING" id="593117.TGAM_1983"/>
<dbReference type="PaxDb" id="593117-TGAM_1983"/>
<dbReference type="GeneID" id="7987040"/>
<dbReference type="KEGG" id="tga:TGAM_1983"/>
<dbReference type="PATRIC" id="fig|593117.10.peg.1993"/>
<dbReference type="eggNOG" id="arCOG04088">
    <property type="taxonomic scope" value="Archaea"/>
</dbReference>
<dbReference type="HOGENOM" id="CLU_056222_2_0_2"/>
<dbReference type="OrthoDB" id="8644at2157"/>
<dbReference type="Proteomes" id="UP000001488">
    <property type="component" value="Chromosome"/>
</dbReference>
<dbReference type="GO" id="GO:0022625">
    <property type="term" value="C:cytosolic large ribosomal subunit"/>
    <property type="evidence" value="ECO:0007669"/>
    <property type="project" value="TreeGrafter"/>
</dbReference>
<dbReference type="GO" id="GO:0008097">
    <property type="term" value="F:5S rRNA binding"/>
    <property type="evidence" value="ECO:0007669"/>
    <property type="project" value="InterPro"/>
</dbReference>
<dbReference type="GO" id="GO:0003735">
    <property type="term" value="F:structural constituent of ribosome"/>
    <property type="evidence" value="ECO:0007669"/>
    <property type="project" value="InterPro"/>
</dbReference>
<dbReference type="GO" id="GO:0000027">
    <property type="term" value="P:ribosomal large subunit assembly"/>
    <property type="evidence" value="ECO:0007669"/>
    <property type="project" value="TreeGrafter"/>
</dbReference>
<dbReference type="GO" id="GO:0006412">
    <property type="term" value="P:translation"/>
    <property type="evidence" value="ECO:0007669"/>
    <property type="project" value="UniProtKB-UniRule"/>
</dbReference>
<dbReference type="CDD" id="cd00432">
    <property type="entry name" value="Ribosomal_L18_L5e"/>
    <property type="match status" value="1"/>
</dbReference>
<dbReference type="FunFam" id="3.30.420.100:FF:000008">
    <property type="entry name" value="50S ribosomal protein L18"/>
    <property type="match status" value="1"/>
</dbReference>
<dbReference type="Gene3D" id="3.30.420.100">
    <property type="match status" value="1"/>
</dbReference>
<dbReference type="HAMAP" id="MF_01337_A">
    <property type="entry name" value="Ribosomal_uL18_A"/>
    <property type="match status" value="1"/>
</dbReference>
<dbReference type="InterPro" id="IPR005485">
    <property type="entry name" value="Rbsml_uL18_euk"/>
</dbReference>
<dbReference type="NCBIfam" id="NF006342">
    <property type="entry name" value="PRK08569.1"/>
    <property type="match status" value="1"/>
</dbReference>
<dbReference type="PANTHER" id="PTHR23410:SF12">
    <property type="entry name" value="LARGE RIBOSOMAL SUBUNIT PROTEIN UL18"/>
    <property type="match status" value="1"/>
</dbReference>
<dbReference type="PANTHER" id="PTHR23410">
    <property type="entry name" value="RIBOSOMAL PROTEIN L5-RELATED"/>
    <property type="match status" value="1"/>
</dbReference>
<dbReference type="Pfam" id="PF17144">
    <property type="entry name" value="Ribosomal_L5e"/>
    <property type="match status" value="2"/>
</dbReference>
<dbReference type="PRINTS" id="PR00058">
    <property type="entry name" value="RIBOSOMALL5"/>
</dbReference>
<dbReference type="SUPFAM" id="SSF53137">
    <property type="entry name" value="Translational machinery components"/>
    <property type="match status" value="1"/>
</dbReference>
<comment type="function">
    <text evidence="1">This is one of the proteins that bind and probably mediate the attachment of the 5S RNA into the large ribosomal subunit, where it forms part of the central protuberance.</text>
</comment>
<comment type="subunit">
    <text evidence="1">Part of the 50S ribosomal subunit. Contacts the 5S and 23S rRNAs.</text>
</comment>
<comment type="similarity">
    <text evidence="1">Belongs to the universal ribosomal protein uL18 family.</text>
</comment>
<organism>
    <name type="scientific">Thermococcus gammatolerans (strain DSM 15229 / JCM 11827 / EJ3)</name>
    <dbReference type="NCBI Taxonomy" id="593117"/>
    <lineage>
        <taxon>Archaea</taxon>
        <taxon>Methanobacteriati</taxon>
        <taxon>Methanobacteriota</taxon>
        <taxon>Thermococci</taxon>
        <taxon>Thermococcales</taxon>
        <taxon>Thermococcaceae</taxon>
        <taxon>Thermococcus</taxon>
    </lineage>
</organism>
<proteinExistence type="inferred from homology"/>
<accession>C5A266</accession>
<sequence length="201" mass="22960">MARGPRYRVPFRRRREGKTNYHKRLKLLKSKKPRLVVRKSLNHHIAQIIVYNPKGDRTIVSAHTRELIRDFGWKGHTGNTPSAYLLGLLIGYKAKKAGIEEAILDIGLHPPTRGSSVFAVLKGAVDAGLNVPHSEEIFPEDYRIRGEHVAEYAKALKQEDETLYRKQFGGYLVKGLEPEKLPEHFEEVKAKIIEKFEGARE</sequence>
<evidence type="ECO:0000255" key="1">
    <source>
        <dbReference type="HAMAP-Rule" id="MF_01337"/>
    </source>
</evidence>
<evidence type="ECO:0000305" key="2"/>
<keyword id="KW-1185">Reference proteome</keyword>
<keyword id="KW-0687">Ribonucleoprotein</keyword>
<keyword id="KW-0689">Ribosomal protein</keyword>
<keyword id="KW-0694">RNA-binding</keyword>
<keyword id="KW-0699">rRNA-binding</keyword>